<gene>
    <name evidence="1" type="primary">groES</name>
    <name evidence="1" type="synonym">groS</name>
    <name type="ordered locus">Wbm0349</name>
</gene>
<protein>
    <recommendedName>
        <fullName evidence="1">Co-chaperonin GroES</fullName>
    </recommendedName>
    <alternativeName>
        <fullName evidence="1">10 kDa chaperonin</fullName>
    </alternativeName>
    <alternativeName>
        <fullName evidence="1">Chaperonin-10</fullName>
        <shortName evidence="1">Cpn10</shortName>
    </alternativeName>
</protein>
<accession>Q5GST6</accession>
<organism>
    <name type="scientific">Wolbachia sp. subsp. Brugia malayi (strain TRS)</name>
    <dbReference type="NCBI Taxonomy" id="292805"/>
    <lineage>
        <taxon>Bacteria</taxon>
        <taxon>Pseudomonadati</taxon>
        <taxon>Pseudomonadota</taxon>
        <taxon>Alphaproteobacteria</taxon>
        <taxon>Rickettsiales</taxon>
        <taxon>Anaplasmataceae</taxon>
        <taxon>Wolbachieae</taxon>
        <taxon>Wolbachia</taxon>
    </lineage>
</organism>
<reference key="1">
    <citation type="journal article" date="2005" name="PLoS Biol.">
        <title>The Wolbachia genome of Brugia malayi: endosymbiont evolution within a human pathogenic nematode.</title>
        <authorList>
            <person name="Foster J."/>
            <person name="Ganatra M."/>
            <person name="Kamal I."/>
            <person name="Ware J."/>
            <person name="Makarova K."/>
            <person name="Ivanova N."/>
            <person name="Bhattacharyya A."/>
            <person name="Kapatral V."/>
            <person name="Kumar S."/>
            <person name="Posfai J."/>
            <person name="Vincze T."/>
            <person name="Ingram J."/>
            <person name="Moran L."/>
            <person name="Lapidus A."/>
            <person name="Omelchenko M."/>
            <person name="Kyrpides N."/>
            <person name="Ghedin E."/>
            <person name="Wang S."/>
            <person name="Goltsman E."/>
            <person name="Joukov V."/>
            <person name="Ostrovskaya O."/>
            <person name="Tsukerman K."/>
            <person name="Mazur M."/>
            <person name="Comb D."/>
            <person name="Koonin E."/>
            <person name="Slatko B."/>
        </authorList>
    </citation>
    <scope>NUCLEOTIDE SEQUENCE [LARGE SCALE GENOMIC DNA]</scope>
    <source>
        <strain>TRS</strain>
    </source>
</reference>
<sequence length="96" mass="10324">MSSISLSVLDDSVLIKPINEEKQGGIVLPSSAEKKPTKGEVIAIGEGSRNSSGERIALTVKAGDKVFYRQWAGTEIEHGSEKLIVMKESDILAIIK</sequence>
<keyword id="KW-0143">Chaperone</keyword>
<keyword id="KW-0963">Cytoplasm</keyword>
<keyword id="KW-1185">Reference proteome</keyword>
<proteinExistence type="inferred from homology"/>
<comment type="function">
    <text evidence="1">Together with the chaperonin GroEL, plays an essential role in assisting protein folding. The GroEL-GroES system forms a nano-cage that allows encapsulation of the non-native substrate proteins and provides a physical environment optimized to promote and accelerate protein folding. GroES binds to the apical surface of the GroEL ring, thereby capping the opening of the GroEL channel.</text>
</comment>
<comment type="subunit">
    <text evidence="1">Heptamer of 7 subunits arranged in a ring. Interacts with the chaperonin GroEL.</text>
</comment>
<comment type="subcellular location">
    <subcellularLocation>
        <location evidence="1">Cytoplasm</location>
    </subcellularLocation>
</comment>
<comment type="similarity">
    <text evidence="1">Belongs to the GroES chaperonin family.</text>
</comment>
<name>CH10_WOLTR</name>
<evidence type="ECO:0000255" key="1">
    <source>
        <dbReference type="HAMAP-Rule" id="MF_00580"/>
    </source>
</evidence>
<feature type="chain" id="PRO_1000025402" description="Co-chaperonin GroES">
    <location>
        <begin position="1"/>
        <end position="96"/>
    </location>
</feature>
<dbReference type="EMBL" id="AE017321">
    <property type="protein sequence ID" value="AAW70938.1"/>
    <property type="molecule type" value="Genomic_DNA"/>
</dbReference>
<dbReference type="SMR" id="Q5GST6"/>
<dbReference type="STRING" id="292805.Wbm0349"/>
<dbReference type="KEGG" id="wbm:Wbm0349"/>
<dbReference type="eggNOG" id="COG0234">
    <property type="taxonomic scope" value="Bacteria"/>
</dbReference>
<dbReference type="HOGENOM" id="CLU_132825_1_0_5"/>
<dbReference type="Proteomes" id="UP000000534">
    <property type="component" value="Chromosome"/>
</dbReference>
<dbReference type="GO" id="GO:0005737">
    <property type="term" value="C:cytoplasm"/>
    <property type="evidence" value="ECO:0007669"/>
    <property type="project" value="UniProtKB-SubCell"/>
</dbReference>
<dbReference type="GO" id="GO:0005524">
    <property type="term" value="F:ATP binding"/>
    <property type="evidence" value="ECO:0007669"/>
    <property type="project" value="InterPro"/>
</dbReference>
<dbReference type="GO" id="GO:0046872">
    <property type="term" value="F:metal ion binding"/>
    <property type="evidence" value="ECO:0007669"/>
    <property type="project" value="TreeGrafter"/>
</dbReference>
<dbReference type="GO" id="GO:0044183">
    <property type="term" value="F:protein folding chaperone"/>
    <property type="evidence" value="ECO:0007669"/>
    <property type="project" value="InterPro"/>
</dbReference>
<dbReference type="GO" id="GO:0051087">
    <property type="term" value="F:protein-folding chaperone binding"/>
    <property type="evidence" value="ECO:0007669"/>
    <property type="project" value="TreeGrafter"/>
</dbReference>
<dbReference type="GO" id="GO:0051082">
    <property type="term" value="F:unfolded protein binding"/>
    <property type="evidence" value="ECO:0007669"/>
    <property type="project" value="TreeGrafter"/>
</dbReference>
<dbReference type="GO" id="GO:0051085">
    <property type="term" value="P:chaperone cofactor-dependent protein refolding"/>
    <property type="evidence" value="ECO:0007669"/>
    <property type="project" value="TreeGrafter"/>
</dbReference>
<dbReference type="CDD" id="cd00320">
    <property type="entry name" value="cpn10"/>
    <property type="match status" value="1"/>
</dbReference>
<dbReference type="FunFam" id="2.30.33.40:FF:000001">
    <property type="entry name" value="10 kDa chaperonin"/>
    <property type="match status" value="1"/>
</dbReference>
<dbReference type="Gene3D" id="2.30.33.40">
    <property type="entry name" value="GroES chaperonin"/>
    <property type="match status" value="1"/>
</dbReference>
<dbReference type="HAMAP" id="MF_00580">
    <property type="entry name" value="CH10"/>
    <property type="match status" value="1"/>
</dbReference>
<dbReference type="InterPro" id="IPR020818">
    <property type="entry name" value="Chaperonin_GroES"/>
</dbReference>
<dbReference type="InterPro" id="IPR037124">
    <property type="entry name" value="Chaperonin_GroES_sf"/>
</dbReference>
<dbReference type="InterPro" id="IPR011032">
    <property type="entry name" value="GroES-like_sf"/>
</dbReference>
<dbReference type="NCBIfam" id="NF001533">
    <property type="entry name" value="PRK00364.2-4"/>
    <property type="match status" value="1"/>
</dbReference>
<dbReference type="PANTHER" id="PTHR10772">
    <property type="entry name" value="10 KDA HEAT SHOCK PROTEIN"/>
    <property type="match status" value="1"/>
</dbReference>
<dbReference type="PANTHER" id="PTHR10772:SF58">
    <property type="entry name" value="CO-CHAPERONIN GROES"/>
    <property type="match status" value="1"/>
</dbReference>
<dbReference type="Pfam" id="PF00166">
    <property type="entry name" value="Cpn10"/>
    <property type="match status" value="1"/>
</dbReference>
<dbReference type="PRINTS" id="PR00297">
    <property type="entry name" value="CHAPERONIN10"/>
</dbReference>
<dbReference type="SMART" id="SM00883">
    <property type="entry name" value="Cpn10"/>
    <property type="match status" value="1"/>
</dbReference>
<dbReference type="SUPFAM" id="SSF50129">
    <property type="entry name" value="GroES-like"/>
    <property type="match status" value="1"/>
</dbReference>